<comment type="function">
    <text evidence="1">Fluoride-specific ion channel. Important for reducing fluoride concentration in the cell, thus reducing its toxicity.</text>
</comment>
<comment type="catalytic activity">
    <reaction evidence="1">
        <text>fluoride(in) = fluoride(out)</text>
        <dbReference type="Rhea" id="RHEA:76159"/>
        <dbReference type="ChEBI" id="CHEBI:17051"/>
    </reaction>
    <physiologicalReaction direction="left-to-right" evidence="1">
        <dbReference type="Rhea" id="RHEA:76160"/>
    </physiologicalReaction>
</comment>
<comment type="activity regulation">
    <text evidence="1">Na(+) is not transported, but it plays an essential structural role and its presence is essential for fluoride channel function.</text>
</comment>
<comment type="subcellular location">
    <subcellularLocation>
        <location evidence="1">Cell inner membrane</location>
        <topology evidence="1">Multi-pass membrane protein</topology>
    </subcellularLocation>
</comment>
<comment type="similarity">
    <text evidence="1">Belongs to the fluoride channel Fluc/FEX (TC 1.A.43) family.</text>
</comment>
<accession>B4SYI7</accession>
<proteinExistence type="inferred from homology"/>
<dbReference type="EMBL" id="CP001113">
    <property type="protein sequence ID" value="ACF63402.1"/>
    <property type="molecule type" value="Genomic_DNA"/>
</dbReference>
<dbReference type="RefSeq" id="WP_000939753.1">
    <property type="nucleotide sequence ID" value="NZ_CCMR01000003.1"/>
</dbReference>
<dbReference type="SMR" id="B4SYI7"/>
<dbReference type="KEGG" id="see:SNSL254_A0685"/>
<dbReference type="HOGENOM" id="CLU_114342_3_3_6"/>
<dbReference type="Proteomes" id="UP000008824">
    <property type="component" value="Chromosome"/>
</dbReference>
<dbReference type="GO" id="GO:0005886">
    <property type="term" value="C:plasma membrane"/>
    <property type="evidence" value="ECO:0007669"/>
    <property type="project" value="UniProtKB-SubCell"/>
</dbReference>
<dbReference type="GO" id="GO:0062054">
    <property type="term" value="F:fluoride channel activity"/>
    <property type="evidence" value="ECO:0007669"/>
    <property type="project" value="UniProtKB-UniRule"/>
</dbReference>
<dbReference type="GO" id="GO:0046872">
    <property type="term" value="F:metal ion binding"/>
    <property type="evidence" value="ECO:0007669"/>
    <property type="project" value="UniProtKB-KW"/>
</dbReference>
<dbReference type="GO" id="GO:0140114">
    <property type="term" value="P:cellular detoxification of fluoride"/>
    <property type="evidence" value="ECO:0007669"/>
    <property type="project" value="UniProtKB-UniRule"/>
</dbReference>
<dbReference type="HAMAP" id="MF_00454">
    <property type="entry name" value="FluC"/>
    <property type="match status" value="1"/>
</dbReference>
<dbReference type="InterPro" id="IPR003691">
    <property type="entry name" value="FluC"/>
</dbReference>
<dbReference type="NCBIfam" id="TIGR00494">
    <property type="entry name" value="crcB"/>
    <property type="match status" value="1"/>
</dbReference>
<dbReference type="NCBIfam" id="NF010792">
    <property type="entry name" value="PRK14196.1"/>
    <property type="match status" value="1"/>
</dbReference>
<dbReference type="PANTHER" id="PTHR28259">
    <property type="entry name" value="FLUORIDE EXPORT PROTEIN 1-RELATED"/>
    <property type="match status" value="1"/>
</dbReference>
<dbReference type="PANTHER" id="PTHR28259:SF1">
    <property type="entry name" value="FLUORIDE EXPORT PROTEIN 1-RELATED"/>
    <property type="match status" value="1"/>
</dbReference>
<dbReference type="Pfam" id="PF02537">
    <property type="entry name" value="CRCB"/>
    <property type="match status" value="1"/>
</dbReference>
<organism>
    <name type="scientific">Salmonella newport (strain SL254)</name>
    <dbReference type="NCBI Taxonomy" id="423368"/>
    <lineage>
        <taxon>Bacteria</taxon>
        <taxon>Pseudomonadati</taxon>
        <taxon>Pseudomonadota</taxon>
        <taxon>Gammaproteobacteria</taxon>
        <taxon>Enterobacterales</taxon>
        <taxon>Enterobacteriaceae</taxon>
        <taxon>Salmonella</taxon>
    </lineage>
</organism>
<sequence>MLQLLLAVFIGGGTGSVARWMLSMRFNPLHQAIPIGTLTANLLGAFIIGMGFAWFNRMTHIDPMWKVLITTGFCGGLTTFSTFSAEVVFLLQEGRFGWALLNVLINLLGSFAMTALAFWLFSAAAAR</sequence>
<feature type="chain" id="PRO_1000125155" description="Fluoride-specific ion channel FluC">
    <location>
        <begin position="1"/>
        <end position="127"/>
    </location>
</feature>
<feature type="transmembrane region" description="Helical" evidence="1">
    <location>
        <begin position="4"/>
        <end position="24"/>
    </location>
</feature>
<feature type="transmembrane region" description="Helical" evidence="1">
    <location>
        <begin position="35"/>
        <end position="55"/>
    </location>
</feature>
<feature type="transmembrane region" description="Helical" evidence="1">
    <location>
        <begin position="71"/>
        <end position="91"/>
    </location>
</feature>
<feature type="transmembrane region" description="Helical" evidence="1">
    <location>
        <begin position="103"/>
        <end position="123"/>
    </location>
</feature>
<feature type="binding site" evidence="1">
    <location>
        <position position="75"/>
    </location>
    <ligand>
        <name>Na(+)</name>
        <dbReference type="ChEBI" id="CHEBI:29101"/>
        <note>structural</note>
    </ligand>
</feature>
<feature type="binding site" evidence="1">
    <location>
        <position position="78"/>
    </location>
    <ligand>
        <name>Na(+)</name>
        <dbReference type="ChEBI" id="CHEBI:29101"/>
        <note>structural</note>
    </ligand>
</feature>
<name>FLUC_SALNS</name>
<keyword id="KW-0997">Cell inner membrane</keyword>
<keyword id="KW-1003">Cell membrane</keyword>
<keyword id="KW-0407">Ion channel</keyword>
<keyword id="KW-0406">Ion transport</keyword>
<keyword id="KW-0472">Membrane</keyword>
<keyword id="KW-0479">Metal-binding</keyword>
<keyword id="KW-0915">Sodium</keyword>
<keyword id="KW-0812">Transmembrane</keyword>
<keyword id="KW-1133">Transmembrane helix</keyword>
<keyword id="KW-0813">Transport</keyword>
<gene>
    <name evidence="1" type="primary">fluC</name>
    <name evidence="1" type="synonym">crcB</name>
    <name type="ordered locus">SNSL254_A0685</name>
</gene>
<evidence type="ECO:0000255" key="1">
    <source>
        <dbReference type="HAMAP-Rule" id="MF_00454"/>
    </source>
</evidence>
<reference key="1">
    <citation type="journal article" date="2011" name="J. Bacteriol.">
        <title>Comparative genomics of 28 Salmonella enterica isolates: evidence for CRISPR-mediated adaptive sublineage evolution.</title>
        <authorList>
            <person name="Fricke W.F."/>
            <person name="Mammel M.K."/>
            <person name="McDermott P.F."/>
            <person name="Tartera C."/>
            <person name="White D.G."/>
            <person name="Leclerc J.E."/>
            <person name="Ravel J."/>
            <person name="Cebula T.A."/>
        </authorList>
    </citation>
    <scope>NUCLEOTIDE SEQUENCE [LARGE SCALE GENOMIC DNA]</scope>
    <source>
        <strain>SL254</strain>
    </source>
</reference>
<protein>
    <recommendedName>
        <fullName evidence="1">Fluoride-specific ion channel FluC</fullName>
    </recommendedName>
</protein>